<sequence>MPSYLRNLVWATLAAGLVSAAPTPSRVSDLTKKSSSTCTFSSAASASASKSSCSTIVLSNIEVPAGKTLDLTDLKDGTKVIFEGTTTFGYKEWSGPLIKISGSDITVEAADGAVINADGSRWWDGEGTNGGKTKPKFFYAHSLDDSTISGLNIKNTPVQAFSIQSDNLIIDGVTIDNSDGDENGGHNTDGFDISESTGVTIRNAVVKNQDDCIAINSGQNIYFTGGTCSGGHGLSIGSVGGRDDNTVKNVTITDSTVTDSANGVRIKTVYDATGSVSDVTFSDITVSGITDYGIVIEQDYENGSPTGTPTSGVPITDLTVKGITGSVESDAVEVYILCGDDACSDWTWSGVDITSGQTSSKCENVPSGASC</sequence>
<protein>
    <recommendedName>
        <fullName>Polygalacturonase</fullName>
        <shortName>PG</shortName>
        <ecNumber>3.2.1.15</ecNumber>
    </recommendedName>
    <alternativeName>
        <fullName>Pectinase</fullName>
    </alternativeName>
</protein>
<comment type="catalytic activity">
    <reaction>
        <text>(1,4-alpha-D-galacturonosyl)n+m + H2O = (1,4-alpha-D-galacturonosyl)n + (1,4-alpha-D-galacturonosyl)m.</text>
        <dbReference type="EC" id="3.2.1.15"/>
    </reaction>
</comment>
<comment type="subcellular location">
    <subcellularLocation>
        <location evidence="5">Secreted</location>
    </subcellularLocation>
</comment>
<comment type="similarity">
    <text evidence="5">Belongs to the glycosyl hydrolase 28 family.</text>
</comment>
<organism>
    <name type="scientific">Penicillium janthinellum</name>
    <name type="common">Penicillium vitale</name>
    <dbReference type="NCBI Taxonomy" id="5079"/>
    <lineage>
        <taxon>Eukaryota</taxon>
        <taxon>Fungi</taxon>
        <taxon>Dikarya</taxon>
        <taxon>Ascomycota</taxon>
        <taxon>Pezizomycotina</taxon>
        <taxon>Eurotiomycetes</taxon>
        <taxon>Eurotiomycetidae</taxon>
        <taxon>Eurotiales</taxon>
        <taxon>Aspergillaceae</taxon>
        <taxon>Penicillium</taxon>
    </lineage>
</organism>
<name>PGLR_PENJA</name>
<keyword id="KW-0961">Cell wall biogenesis/degradation</keyword>
<keyword id="KW-1015">Disulfide bond</keyword>
<keyword id="KW-0325">Glycoprotein</keyword>
<keyword id="KW-0326">Glycosidase</keyword>
<keyword id="KW-0378">Hydrolase</keyword>
<keyword id="KW-0677">Repeat</keyword>
<keyword id="KW-0964">Secreted</keyword>
<keyword id="KW-0732">Signal</keyword>
<proteinExistence type="inferred from homology"/>
<reference key="1">
    <citation type="journal article" date="1997" name="J. Ferment. Bioeng.">
        <title>Cloning and characterization of a polygalacturonase-encoding gene from Penicillium janthinellum.</title>
        <authorList>
            <person name="Ishida Y."/>
            <person name="Kakibuchi K."/>
            <person name="Hirao Y."/>
            <person name="Izumori K."/>
        </authorList>
    </citation>
    <scope>NUCLEOTIDE SEQUENCE [GENOMIC DNA]</scope>
    <source>
        <strain>NBRC 7719</strain>
    </source>
</reference>
<evidence type="ECO:0000250" key="1">
    <source>
        <dbReference type="UniProtKB" id="O74213"/>
    </source>
</evidence>
<evidence type="ECO:0000255" key="2"/>
<evidence type="ECO:0000255" key="3">
    <source>
        <dbReference type="PROSITE-ProRule" id="PRU00498"/>
    </source>
</evidence>
<evidence type="ECO:0000255" key="4">
    <source>
        <dbReference type="PROSITE-ProRule" id="PRU10052"/>
    </source>
</evidence>
<evidence type="ECO:0000305" key="5"/>
<accession>O42824</accession>
<dbReference type="EC" id="3.2.1.15"/>
<dbReference type="EMBL" id="D79980">
    <property type="protein sequence ID" value="BAA24524.1"/>
    <property type="molecule type" value="Genomic_DNA"/>
</dbReference>
<dbReference type="SMR" id="O42824"/>
<dbReference type="CAZy" id="GH28">
    <property type="family name" value="Glycoside Hydrolase Family 28"/>
</dbReference>
<dbReference type="GO" id="GO:0005576">
    <property type="term" value="C:extracellular region"/>
    <property type="evidence" value="ECO:0007669"/>
    <property type="project" value="UniProtKB-SubCell"/>
</dbReference>
<dbReference type="GO" id="GO:0004650">
    <property type="term" value="F:polygalacturonase activity"/>
    <property type="evidence" value="ECO:0007669"/>
    <property type="project" value="UniProtKB-EC"/>
</dbReference>
<dbReference type="GO" id="GO:0071555">
    <property type="term" value="P:cell wall organization"/>
    <property type="evidence" value="ECO:0007669"/>
    <property type="project" value="UniProtKB-KW"/>
</dbReference>
<dbReference type="GO" id="GO:0045490">
    <property type="term" value="P:pectin catabolic process"/>
    <property type="evidence" value="ECO:0007669"/>
    <property type="project" value="TreeGrafter"/>
</dbReference>
<dbReference type="FunFam" id="2.160.20.10:FF:000002">
    <property type="entry name" value="Endopolygalacturonase D"/>
    <property type="match status" value="1"/>
</dbReference>
<dbReference type="Gene3D" id="2.160.20.10">
    <property type="entry name" value="Single-stranded right-handed beta-helix, Pectin lyase-like"/>
    <property type="match status" value="1"/>
</dbReference>
<dbReference type="InterPro" id="IPR000743">
    <property type="entry name" value="Glyco_hydro_28"/>
</dbReference>
<dbReference type="InterPro" id="IPR050434">
    <property type="entry name" value="Glycosyl_hydrlase_28"/>
</dbReference>
<dbReference type="InterPro" id="IPR006626">
    <property type="entry name" value="PbH1"/>
</dbReference>
<dbReference type="InterPro" id="IPR012334">
    <property type="entry name" value="Pectin_lyas_fold"/>
</dbReference>
<dbReference type="InterPro" id="IPR011050">
    <property type="entry name" value="Pectin_lyase_fold/virulence"/>
</dbReference>
<dbReference type="PANTHER" id="PTHR31884:SF13">
    <property type="entry name" value="ENDOPOLYGALACTURONASE B"/>
    <property type="match status" value="1"/>
</dbReference>
<dbReference type="PANTHER" id="PTHR31884">
    <property type="entry name" value="POLYGALACTURONASE"/>
    <property type="match status" value="1"/>
</dbReference>
<dbReference type="Pfam" id="PF00295">
    <property type="entry name" value="Glyco_hydro_28"/>
    <property type="match status" value="1"/>
</dbReference>
<dbReference type="SMART" id="SM00710">
    <property type="entry name" value="PbH1"/>
    <property type="match status" value="7"/>
</dbReference>
<dbReference type="SUPFAM" id="SSF51126">
    <property type="entry name" value="Pectin lyase-like"/>
    <property type="match status" value="1"/>
</dbReference>
<dbReference type="PROSITE" id="PS00502">
    <property type="entry name" value="POLYGALACTURONASE"/>
    <property type="match status" value="1"/>
</dbReference>
<feature type="signal peptide" evidence="2">
    <location>
        <begin position="1"/>
        <end position="19"/>
    </location>
</feature>
<feature type="propeptide" id="PRO_0000024790" evidence="2">
    <location>
        <begin position="20"/>
        <end position="34"/>
    </location>
</feature>
<feature type="chain" id="PRO_0000024791" description="Polygalacturonase">
    <location>
        <begin position="35"/>
        <end position="371"/>
    </location>
</feature>
<feature type="repeat" description="PbH1 1" evidence="2">
    <location>
        <begin position="95"/>
        <end position="117"/>
    </location>
</feature>
<feature type="repeat" description="PbH1 2" evidence="2">
    <location>
        <begin position="165"/>
        <end position="195"/>
    </location>
</feature>
<feature type="repeat" description="PbH1 3" evidence="2">
    <location>
        <begin position="196"/>
        <end position="217"/>
    </location>
</feature>
<feature type="repeat" description="PbH1 4" evidence="2">
    <location>
        <begin position="218"/>
        <end position="238"/>
    </location>
</feature>
<feature type="repeat" description="PbH1 5" evidence="2">
    <location>
        <begin position="247"/>
        <end position="268"/>
    </location>
</feature>
<feature type="repeat" description="PbH1 6" evidence="2">
    <location>
        <begin position="276"/>
        <end position="298"/>
    </location>
</feature>
<feature type="repeat" description="PbH1 7" evidence="2">
    <location>
        <begin position="310"/>
        <end position="355"/>
    </location>
</feature>
<feature type="active site" description="Proton donor" evidence="1">
    <location>
        <position position="210"/>
    </location>
</feature>
<feature type="active site" evidence="4">
    <location>
        <position position="232"/>
    </location>
</feature>
<feature type="glycosylation site" description="N-linked (GlcNAc...) asparagine" evidence="3">
    <location>
        <position position="249"/>
    </location>
</feature>
<feature type="disulfide bond" evidence="1">
    <location>
        <begin position="38"/>
        <end position="53"/>
    </location>
</feature>
<feature type="disulfide bond" evidence="1">
    <location>
        <begin position="212"/>
        <end position="228"/>
    </location>
</feature>
<feature type="disulfide bond" evidence="1">
    <location>
        <begin position="338"/>
        <end position="343"/>
    </location>
</feature>
<feature type="disulfide bond" evidence="1">
    <location>
        <begin position="362"/>
        <end position="371"/>
    </location>
</feature>